<accession>A9R919</accession>
<feature type="chain" id="PRO_1000144512" description="Large ribosomal subunit protein bL17">
    <location>
        <begin position="1"/>
        <end position="129"/>
    </location>
</feature>
<dbReference type="EMBL" id="CP000901">
    <property type="protein sequence ID" value="ABX86258.1"/>
    <property type="molecule type" value="Genomic_DNA"/>
</dbReference>
<dbReference type="RefSeq" id="WP_002209014.1">
    <property type="nucleotide sequence ID" value="NZ_CP009935.1"/>
</dbReference>
<dbReference type="SMR" id="A9R919"/>
<dbReference type="GeneID" id="57974369"/>
<dbReference type="KEGG" id="ypg:YpAngola_A0607"/>
<dbReference type="PATRIC" id="fig|349746.12.peg.1559"/>
<dbReference type="GO" id="GO:0022625">
    <property type="term" value="C:cytosolic large ribosomal subunit"/>
    <property type="evidence" value="ECO:0007669"/>
    <property type="project" value="TreeGrafter"/>
</dbReference>
<dbReference type="GO" id="GO:0003735">
    <property type="term" value="F:structural constituent of ribosome"/>
    <property type="evidence" value="ECO:0007669"/>
    <property type="project" value="InterPro"/>
</dbReference>
<dbReference type="GO" id="GO:0006412">
    <property type="term" value="P:translation"/>
    <property type="evidence" value="ECO:0007669"/>
    <property type="project" value="UniProtKB-UniRule"/>
</dbReference>
<dbReference type="FunFam" id="3.90.1030.10:FF:000001">
    <property type="entry name" value="50S ribosomal protein L17"/>
    <property type="match status" value="1"/>
</dbReference>
<dbReference type="Gene3D" id="3.90.1030.10">
    <property type="entry name" value="Ribosomal protein L17"/>
    <property type="match status" value="1"/>
</dbReference>
<dbReference type="HAMAP" id="MF_01368">
    <property type="entry name" value="Ribosomal_bL17"/>
    <property type="match status" value="1"/>
</dbReference>
<dbReference type="InterPro" id="IPR000456">
    <property type="entry name" value="Ribosomal_bL17"/>
</dbReference>
<dbReference type="InterPro" id="IPR047859">
    <property type="entry name" value="Ribosomal_bL17_CS"/>
</dbReference>
<dbReference type="InterPro" id="IPR036373">
    <property type="entry name" value="Ribosomal_bL17_sf"/>
</dbReference>
<dbReference type="NCBIfam" id="TIGR00059">
    <property type="entry name" value="L17"/>
    <property type="match status" value="1"/>
</dbReference>
<dbReference type="PANTHER" id="PTHR14413:SF16">
    <property type="entry name" value="LARGE RIBOSOMAL SUBUNIT PROTEIN BL17M"/>
    <property type="match status" value="1"/>
</dbReference>
<dbReference type="PANTHER" id="PTHR14413">
    <property type="entry name" value="RIBOSOMAL PROTEIN L17"/>
    <property type="match status" value="1"/>
</dbReference>
<dbReference type="Pfam" id="PF01196">
    <property type="entry name" value="Ribosomal_L17"/>
    <property type="match status" value="1"/>
</dbReference>
<dbReference type="SUPFAM" id="SSF64263">
    <property type="entry name" value="Prokaryotic ribosomal protein L17"/>
    <property type="match status" value="1"/>
</dbReference>
<dbReference type="PROSITE" id="PS01167">
    <property type="entry name" value="RIBOSOMAL_L17"/>
    <property type="match status" value="1"/>
</dbReference>
<evidence type="ECO:0000255" key="1">
    <source>
        <dbReference type="HAMAP-Rule" id="MF_01368"/>
    </source>
</evidence>
<evidence type="ECO:0000305" key="2"/>
<comment type="subunit">
    <text evidence="1">Part of the 50S ribosomal subunit. Contacts protein L32.</text>
</comment>
<comment type="similarity">
    <text evidence="1">Belongs to the bacterial ribosomal protein bL17 family.</text>
</comment>
<keyword id="KW-0687">Ribonucleoprotein</keyword>
<keyword id="KW-0689">Ribosomal protein</keyword>
<reference key="1">
    <citation type="journal article" date="2010" name="J. Bacteriol.">
        <title>Genome sequence of the deep-rooted Yersinia pestis strain Angola reveals new insights into the evolution and pangenome of the plague bacterium.</title>
        <authorList>
            <person name="Eppinger M."/>
            <person name="Worsham P.L."/>
            <person name="Nikolich M.P."/>
            <person name="Riley D.R."/>
            <person name="Sebastian Y."/>
            <person name="Mou S."/>
            <person name="Achtman M."/>
            <person name="Lindler L.E."/>
            <person name="Ravel J."/>
        </authorList>
    </citation>
    <scope>NUCLEOTIDE SEQUENCE [LARGE SCALE GENOMIC DNA]</scope>
    <source>
        <strain>Angola</strain>
    </source>
</reference>
<proteinExistence type="inferred from homology"/>
<organism>
    <name type="scientific">Yersinia pestis bv. Antiqua (strain Angola)</name>
    <dbReference type="NCBI Taxonomy" id="349746"/>
    <lineage>
        <taxon>Bacteria</taxon>
        <taxon>Pseudomonadati</taxon>
        <taxon>Pseudomonadota</taxon>
        <taxon>Gammaproteobacteria</taxon>
        <taxon>Enterobacterales</taxon>
        <taxon>Yersiniaceae</taxon>
        <taxon>Yersinia</taxon>
    </lineage>
</organism>
<gene>
    <name evidence="1" type="primary">rplQ</name>
    <name type="ordered locus">YpAngola_A0607</name>
</gene>
<sequence>MRHRKSGRQLNRNSSHRQAMFRNMAGSLVRHEIIKTTLPKAKELRRVVEPLITLAKTDNVANRRLAFARTRDNEIVAKLFNELGPRFASRAGGYTRILKCGFRAGDNAPMAYIELVDRAASQAEVVAAE</sequence>
<name>RL17_YERPG</name>
<protein>
    <recommendedName>
        <fullName evidence="1">Large ribosomal subunit protein bL17</fullName>
    </recommendedName>
    <alternativeName>
        <fullName evidence="2">50S ribosomal protein L17</fullName>
    </alternativeName>
</protein>